<keyword id="KW-0240">DNA-directed RNA polymerase</keyword>
<keyword id="KW-0548">Nucleotidyltransferase</keyword>
<keyword id="KW-0804">Transcription</keyword>
<keyword id="KW-0808">Transferase</keyword>
<dbReference type="EC" id="2.7.7.6" evidence="1"/>
<dbReference type="EMBL" id="CP000962">
    <property type="protein sequence ID" value="ACA56498.1"/>
    <property type="molecule type" value="Genomic_DNA"/>
</dbReference>
<dbReference type="RefSeq" id="WP_012344363.1">
    <property type="nucleotide sequence ID" value="NC_010520.1"/>
</dbReference>
<dbReference type="SMR" id="B1KSN3"/>
<dbReference type="KEGG" id="cbl:CLK_2932"/>
<dbReference type="HOGENOM" id="CLU_000524_4_3_9"/>
<dbReference type="GO" id="GO:0000428">
    <property type="term" value="C:DNA-directed RNA polymerase complex"/>
    <property type="evidence" value="ECO:0007669"/>
    <property type="project" value="UniProtKB-KW"/>
</dbReference>
<dbReference type="GO" id="GO:0003677">
    <property type="term" value="F:DNA binding"/>
    <property type="evidence" value="ECO:0007669"/>
    <property type="project" value="UniProtKB-UniRule"/>
</dbReference>
<dbReference type="GO" id="GO:0003899">
    <property type="term" value="F:DNA-directed RNA polymerase activity"/>
    <property type="evidence" value="ECO:0007669"/>
    <property type="project" value="UniProtKB-UniRule"/>
</dbReference>
<dbReference type="GO" id="GO:0032549">
    <property type="term" value="F:ribonucleoside binding"/>
    <property type="evidence" value="ECO:0007669"/>
    <property type="project" value="InterPro"/>
</dbReference>
<dbReference type="GO" id="GO:0006351">
    <property type="term" value="P:DNA-templated transcription"/>
    <property type="evidence" value="ECO:0007669"/>
    <property type="project" value="UniProtKB-UniRule"/>
</dbReference>
<dbReference type="CDD" id="cd00653">
    <property type="entry name" value="RNA_pol_B_RPB2"/>
    <property type="match status" value="1"/>
</dbReference>
<dbReference type="FunFam" id="3.90.1800.10:FF:000001">
    <property type="entry name" value="DNA-directed RNA polymerase subunit beta"/>
    <property type="match status" value="1"/>
</dbReference>
<dbReference type="Gene3D" id="2.40.50.100">
    <property type="match status" value="1"/>
</dbReference>
<dbReference type="Gene3D" id="2.40.50.150">
    <property type="match status" value="1"/>
</dbReference>
<dbReference type="Gene3D" id="3.90.1100.10">
    <property type="match status" value="2"/>
</dbReference>
<dbReference type="Gene3D" id="2.30.150.10">
    <property type="entry name" value="DNA-directed RNA polymerase, beta subunit, external 1 domain"/>
    <property type="match status" value="1"/>
</dbReference>
<dbReference type="Gene3D" id="2.40.270.10">
    <property type="entry name" value="DNA-directed RNA polymerase, subunit 2, domain 6"/>
    <property type="match status" value="2"/>
</dbReference>
<dbReference type="Gene3D" id="3.90.1800.10">
    <property type="entry name" value="RNA polymerase alpha subunit dimerisation domain"/>
    <property type="match status" value="1"/>
</dbReference>
<dbReference type="Gene3D" id="3.90.1110.10">
    <property type="entry name" value="RNA polymerase Rpb2, domain 2"/>
    <property type="match status" value="2"/>
</dbReference>
<dbReference type="HAMAP" id="MF_01321">
    <property type="entry name" value="RNApol_bact_RpoB"/>
    <property type="match status" value="1"/>
</dbReference>
<dbReference type="InterPro" id="IPR042107">
    <property type="entry name" value="DNA-dir_RNA_pol_bsu_ext_1_sf"/>
</dbReference>
<dbReference type="InterPro" id="IPR019462">
    <property type="entry name" value="DNA-dir_RNA_pol_bsu_external_1"/>
</dbReference>
<dbReference type="InterPro" id="IPR015712">
    <property type="entry name" value="DNA-dir_RNA_pol_su2"/>
</dbReference>
<dbReference type="InterPro" id="IPR007120">
    <property type="entry name" value="DNA-dir_RNAP_su2_dom"/>
</dbReference>
<dbReference type="InterPro" id="IPR037033">
    <property type="entry name" value="DNA-dir_RNAP_su2_hyb_sf"/>
</dbReference>
<dbReference type="InterPro" id="IPR010243">
    <property type="entry name" value="RNA_pol_bsu_bac"/>
</dbReference>
<dbReference type="InterPro" id="IPR007121">
    <property type="entry name" value="RNA_pol_bsu_CS"/>
</dbReference>
<dbReference type="InterPro" id="IPR007644">
    <property type="entry name" value="RNA_pol_bsu_protrusion"/>
</dbReference>
<dbReference type="InterPro" id="IPR007642">
    <property type="entry name" value="RNA_pol_Rpb2_2"/>
</dbReference>
<dbReference type="InterPro" id="IPR037034">
    <property type="entry name" value="RNA_pol_Rpb2_2_sf"/>
</dbReference>
<dbReference type="InterPro" id="IPR007645">
    <property type="entry name" value="RNA_pol_Rpb2_3"/>
</dbReference>
<dbReference type="InterPro" id="IPR007641">
    <property type="entry name" value="RNA_pol_Rpb2_7"/>
</dbReference>
<dbReference type="InterPro" id="IPR014724">
    <property type="entry name" value="RNA_pol_RPB2_OB-fold"/>
</dbReference>
<dbReference type="NCBIfam" id="NF001616">
    <property type="entry name" value="PRK00405.1"/>
    <property type="match status" value="1"/>
</dbReference>
<dbReference type="NCBIfam" id="TIGR02013">
    <property type="entry name" value="rpoB"/>
    <property type="match status" value="1"/>
</dbReference>
<dbReference type="PANTHER" id="PTHR20856">
    <property type="entry name" value="DNA-DIRECTED RNA POLYMERASE I SUBUNIT 2"/>
    <property type="match status" value="1"/>
</dbReference>
<dbReference type="Pfam" id="PF04563">
    <property type="entry name" value="RNA_pol_Rpb2_1"/>
    <property type="match status" value="1"/>
</dbReference>
<dbReference type="Pfam" id="PF04561">
    <property type="entry name" value="RNA_pol_Rpb2_2"/>
    <property type="match status" value="2"/>
</dbReference>
<dbReference type="Pfam" id="PF04565">
    <property type="entry name" value="RNA_pol_Rpb2_3"/>
    <property type="match status" value="1"/>
</dbReference>
<dbReference type="Pfam" id="PF10385">
    <property type="entry name" value="RNA_pol_Rpb2_45"/>
    <property type="match status" value="1"/>
</dbReference>
<dbReference type="Pfam" id="PF00562">
    <property type="entry name" value="RNA_pol_Rpb2_6"/>
    <property type="match status" value="1"/>
</dbReference>
<dbReference type="Pfam" id="PF04560">
    <property type="entry name" value="RNA_pol_Rpb2_7"/>
    <property type="match status" value="1"/>
</dbReference>
<dbReference type="SUPFAM" id="SSF64484">
    <property type="entry name" value="beta and beta-prime subunits of DNA dependent RNA-polymerase"/>
    <property type="match status" value="1"/>
</dbReference>
<dbReference type="PROSITE" id="PS01166">
    <property type="entry name" value="RNA_POL_BETA"/>
    <property type="match status" value="1"/>
</dbReference>
<proteinExistence type="inferred from homology"/>
<gene>
    <name evidence="1" type="primary">rpoB</name>
    <name type="ordered locus">CLK_2932</name>
</gene>
<reference key="1">
    <citation type="journal article" date="2007" name="PLoS ONE">
        <title>Analysis of the neurotoxin complex genes in Clostridium botulinum A1-A4 and B1 strains: BoNT/A3, /Ba4 and /B1 clusters are located within plasmids.</title>
        <authorList>
            <person name="Smith T.J."/>
            <person name="Hill K.K."/>
            <person name="Foley B.T."/>
            <person name="Detter J.C."/>
            <person name="Munk A.C."/>
            <person name="Bruce D.C."/>
            <person name="Doggett N.A."/>
            <person name="Smith L.A."/>
            <person name="Marks J.D."/>
            <person name="Xie G."/>
            <person name="Brettin T.S."/>
        </authorList>
    </citation>
    <scope>NUCLEOTIDE SEQUENCE [LARGE SCALE GENOMIC DNA]</scope>
    <source>
        <strain>Loch Maree / Type A3</strain>
    </source>
</reference>
<organism>
    <name type="scientific">Clostridium botulinum (strain Loch Maree / Type A3)</name>
    <dbReference type="NCBI Taxonomy" id="498214"/>
    <lineage>
        <taxon>Bacteria</taxon>
        <taxon>Bacillati</taxon>
        <taxon>Bacillota</taxon>
        <taxon>Clostridia</taxon>
        <taxon>Eubacteriales</taxon>
        <taxon>Clostridiaceae</taxon>
        <taxon>Clostridium</taxon>
    </lineage>
</organism>
<accession>B1KSN3</accession>
<feature type="chain" id="PRO_1000141680" description="DNA-directed RNA polymerase subunit beta">
    <location>
        <begin position="1"/>
        <end position="1239"/>
    </location>
</feature>
<feature type="region of interest" description="Disordered" evidence="2">
    <location>
        <begin position="1182"/>
        <end position="1239"/>
    </location>
</feature>
<feature type="compositionally biased region" description="Acidic residues" evidence="2">
    <location>
        <begin position="1191"/>
        <end position="1200"/>
    </location>
</feature>
<feature type="compositionally biased region" description="Acidic residues" evidence="2">
    <location>
        <begin position="1206"/>
        <end position="1239"/>
    </location>
</feature>
<name>RPOB_CLOBM</name>
<comment type="function">
    <text evidence="1">DNA-dependent RNA polymerase catalyzes the transcription of DNA into RNA using the four ribonucleoside triphosphates as substrates.</text>
</comment>
<comment type="catalytic activity">
    <reaction evidence="1">
        <text>RNA(n) + a ribonucleoside 5'-triphosphate = RNA(n+1) + diphosphate</text>
        <dbReference type="Rhea" id="RHEA:21248"/>
        <dbReference type="Rhea" id="RHEA-COMP:14527"/>
        <dbReference type="Rhea" id="RHEA-COMP:17342"/>
        <dbReference type="ChEBI" id="CHEBI:33019"/>
        <dbReference type="ChEBI" id="CHEBI:61557"/>
        <dbReference type="ChEBI" id="CHEBI:140395"/>
        <dbReference type="EC" id="2.7.7.6"/>
    </reaction>
</comment>
<comment type="subunit">
    <text evidence="1">The RNAP catalytic core consists of 2 alpha, 1 beta, 1 beta' and 1 omega subunit. When a sigma factor is associated with the core the holoenzyme is formed, which can initiate transcription.</text>
</comment>
<comment type="similarity">
    <text evidence="1">Belongs to the RNA polymerase beta chain family.</text>
</comment>
<protein>
    <recommendedName>
        <fullName evidence="1">DNA-directed RNA polymerase subunit beta</fullName>
        <shortName evidence="1">RNAP subunit beta</shortName>
        <ecNumber evidence="1">2.7.7.6</ecNumber>
    </recommendedName>
    <alternativeName>
        <fullName evidence="1">RNA polymerase subunit beta</fullName>
    </alternativeName>
    <alternativeName>
        <fullName evidence="1">Transcriptase subunit beta</fullName>
    </alternativeName>
</protein>
<sequence length="1239" mass="139848">MVHPVQVGKRTRMSFSRLKEVGQMPNLIEVQLDSYDWFLKEGLQEVFDDINPIQDYTGNLNLEFVGYKLDLDSIKYSVEECKERDSTYAAPLKVKVRLLNKETGEIKEQEVFMGDFPLMTEQGTFIINGAERVIVSQLVRSPGVYYDMTVDKTGSKLFSATVIPNRGAWLEYETDSNNIIYVRIDKTRKLPITILARALGYGTDAEIIEFFGEDERLKATIEKDNTKTREEALLEIYKRLRPGEPPTVDSAESLIESLFFDAKRYDLSRVGRYKFNKKLAIHLRITNQIADQDIVNPQTGEILVQKGEKIDKDKAIEIQNCGVNEVYIKIDDKSFKVIGNHFVDIHSLISFDISDLNIKEYVFYPVLKEILDNYADEESIKEEIRKNIYRLIPKHIIREDIYATINYELGLSYDIGYKDDIDHLGNRRLRSVGELLQNQFRIGLSRMERVVKERMTIQDQEVITPQALINIRPVAASIKEFFGSSQLSQFMDQTNPLSELTHKRRLSALGPGGLSRERAGFEVRDVHHSHYGRMCPIETPEGPNIGLINSLATFAKVNEYGFIETPYRRIDPKNKRATNDIVYMTADEEDLYVIARSDEPIDENGYFMDDKVTVRAKEEVLVVPVSEVEYMDISPRQLVSVATAMIPFLENDDASRALMGSNMQRQAVPLLKPQAPIVGTGIEYKAATDSGVLPKAKNAGTVAYVSADEIRVRRDSDGGIDKYKLLKFKRSNQGTCINQRPIVSKGEVVAKETLLADGPSTDLGEIALGKNILMGFITWEGYNYEDAMLISEQLVREDVFTSIHIEEYEAEARDTKLGPEEITRDIPNVGEEALKDIDERGIIRIGAEVRSGDILVGKVTPKGETELTAEERLLRAIFGEKAREVRDTSLRVPHGEAGIIVDVKIFTRENGDELPPGVNKLVRCYIAQKRKISVGDKMAGRHGNKGVISRVLPEEDMPFLPDGRPLQICLNPLGVPSRMNIGQVLEVHLGLAASKLGWHIATPVFDGAIESDIVDCLRKAGYSEDGKTVLYDGRTGEPFDNRVTVGYMYILKLAHLVDDKIHARSTGPYSLVTQQPLGGKAQFGGQRFGEMEVWALEAYGAAHTLQEILTVKSDDVVGRVKTYEAIVKGENIPEPGVPESFKVLIKELQALCLDVKVLNDDNQEIKLKESVDEDVDELEVNIEGAENQLEDKEEKEEEKEENYKEDSDEYDDLREEDVEPDLEELSLDDLDLDDFGDEH</sequence>
<evidence type="ECO:0000255" key="1">
    <source>
        <dbReference type="HAMAP-Rule" id="MF_01321"/>
    </source>
</evidence>
<evidence type="ECO:0000256" key="2">
    <source>
        <dbReference type="SAM" id="MobiDB-lite"/>
    </source>
</evidence>